<evidence type="ECO:0000255" key="1">
    <source>
        <dbReference type="HAMAP-Rule" id="MF_00453"/>
    </source>
</evidence>
<proteinExistence type="inferred from homology"/>
<accession>Q57IX4</accession>
<name>PCKA_SALCH</name>
<gene>
    <name evidence="1" type="primary">pckA</name>
    <name type="ordered locus">SCH_3432</name>
</gene>
<organism>
    <name type="scientific">Salmonella choleraesuis (strain SC-B67)</name>
    <dbReference type="NCBI Taxonomy" id="321314"/>
    <lineage>
        <taxon>Bacteria</taxon>
        <taxon>Pseudomonadati</taxon>
        <taxon>Pseudomonadota</taxon>
        <taxon>Gammaproteobacteria</taxon>
        <taxon>Enterobacterales</taxon>
        <taxon>Enterobacteriaceae</taxon>
        <taxon>Salmonella</taxon>
    </lineage>
</organism>
<sequence>MRVNNLTPQDLKAYGINDVQDIVYNPSYDTLYQEELNPGLEGYERGVLTNLGAVAVDTGIFTGRSPKDKYIVRDDTTRDTLWWSDKGKGKNDNKPLSQETWQHLKGLVTHQLSGKRLFIVDTFCGANADTRLSVRFITEVAWQAHFVKNMFIRPTDEELVGFKPDFIVMNGAKCTNPQWKEQGLNSENFVAFNLTERIQLIGGTWYGGEMKKGMFSVMNYLLPLKGIASMHCSANVGEKGDVAVFFGLSGTGKTTLSTDPKRRLIGDDEHGWDDDGVFNFEGGCYAKTIKLSKEAEPEIYHAIRRDALLENVTVREDGTVDFDDGSKTENTRVSYPIYHIDNIVKPVSKAGHATKVIFLTADAFGVLPPVSRLTANQTQYHFLSGFTAKLAGTERGVTEPTPTFSACFGAAFLTLHPTQYAEVLVKRMQAAGAQAYLVNTGWNGTGKRISIKDTRAIIDAILNGSLDNAETFRLPLFDLAIPTELPGVDTHILDPRNTYASPEQWQEKATALAKLFIENFEKYTDTPAGEALVSAGPKL</sequence>
<protein>
    <recommendedName>
        <fullName evidence="1">Phosphoenolpyruvate carboxykinase (ATP)</fullName>
        <shortName evidence="1">PCK</shortName>
        <shortName evidence="1">PEP carboxykinase</shortName>
        <shortName evidence="1">PEPCK</shortName>
        <ecNumber evidence="1">4.1.1.49</ecNumber>
    </recommendedName>
</protein>
<reference key="1">
    <citation type="journal article" date="2005" name="Nucleic Acids Res.">
        <title>The genome sequence of Salmonella enterica serovar Choleraesuis, a highly invasive and resistant zoonotic pathogen.</title>
        <authorList>
            <person name="Chiu C.-H."/>
            <person name="Tang P."/>
            <person name="Chu C."/>
            <person name="Hu S."/>
            <person name="Bao Q."/>
            <person name="Yu J."/>
            <person name="Chou Y.-Y."/>
            <person name="Wang H.-S."/>
            <person name="Lee Y.-S."/>
        </authorList>
    </citation>
    <scope>NUCLEOTIDE SEQUENCE [LARGE SCALE GENOMIC DNA]</scope>
    <source>
        <strain>SC-B67</strain>
    </source>
</reference>
<dbReference type="EC" id="4.1.1.49" evidence="1"/>
<dbReference type="EMBL" id="AE017220">
    <property type="protein sequence ID" value="AAX67338.1"/>
    <property type="molecule type" value="Genomic_DNA"/>
</dbReference>
<dbReference type="RefSeq" id="WP_001541020.1">
    <property type="nucleotide sequence ID" value="NC_006905.1"/>
</dbReference>
<dbReference type="SMR" id="Q57IX4"/>
<dbReference type="KEGG" id="sec:SCH_3432"/>
<dbReference type="HOGENOM" id="CLU_018247_0_1_6"/>
<dbReference type="UniPathway" id="UPA00138"/>
<dbReference type="Proteomes" id="UP000000538">
    <property type="component" value="Chromosome"/>
</dbReference>
<dbReference type="GO" id="GO:0005829">
    <property type="term" value="C:cytosol"/>
    <property type="evidence" value="ECO:0007669"/>
    <property type="project" value="TreeGrafter"/>
</dbReference>
<dbReference type="GO" id="GO:0005524">
    <property type="term" value="F:ATP binding"/>
    <property type="evidence" value="ECO:0007669"/>
    <property type="project" value="UniProtKB-UniRule"/>
</dbReference>
<dbReference type="GO" id="GO:0046872">
    <property type="term" value="F:metal ion binding"/>
    <property type="evidence" value="ECO:0007669"/>
    <property type="project" value="UniProtKB-KW"/>
</dbReference>
<dbReference type="GO" id="GO:0004612">
    <property type="term" value="F:phosphoenolpyruvate carboxykinase (ATP) activity"/>
    <property type="evidence" value="ECO:0007669"/>
    <property type="project" value="UniProtKB-UniRule"/>
</dbReference>
<dbReference type="GO" id="GO:0006094">
    <property type="term" value="P:gluconeogenesis"/>
    <property type="evidence" value="ECO:0007669"/>
    <property type="project" value="UniProtKB-UniRule"/>
</dbReference>
<dbReference type="CDD" id="cd00484">
    <property type="entry name" value="PEPCK_ATP"/>
    <property type="match status" value="1"/>
</dbReference>
<dbReference type="FunFam" id="2.170.8.10:FF:000001">
    <property type="entry name" value="Phosphoenolpyruvate carboxykinase (ATP)"/>
    <property type="match status" value="1"/>
</dbReference>
<dbReference type="FunFam" id="3.40.449.10:FF:000001">
    <property type="entry name" value="Phosphoenolpyruvate carboxykinase (ATP)"/>
    <property type="match status" value="1"/>
</dbReference>
<dbReference type="Gene3D" id="3.90.228.20">
    <property type="match status" value="1"/>
</dbReference>
<dbReference type="Gene3D" id="3.40.449.10">
    <property type="entry name" value="Phosphoenolpyruvate Carboxykinase, domain 1"/>
    <property type="match status" value="1"/>
</dbReference>
<dbReference type="Gene3D" id="2.170.8.10">
    <property type="entry name" value="Phosphoenolpyruvate Carboxykinase, domain 2"/>
    <property type="match status" value="1"/>
</dbReference>
<dbReference type="HAMAP" id="MF_00453">
    <property type="entry name" value="PEPCK_ATP"/>
    <property type="match status" value="1"/>
</dbReference>
<dbReference type="InterPro" id="IPR001272">
    <property type="entry name" value="PEP_carboxykinase_ATP"/>
</dbReference>
<dbReference type="InterPro" id="IPR013035">
    <property type="entry name" value="PEP_carboxykinase_C"/>
</dbReference>
<dbReference type="InterPro" id="IPR008210">
    <property type="entry name" value="PEP_carboxykinase_N"/>
</dbReference>
<dbReference type="InterPro" id="IPR015994">
    <property type="entry name" value="PEPCK_ATP_CS"/>
</dbReference>
<dbReference type="NCBIfam" id="TIGR00224">
    <property type="entry name" value="pckA"/>
    <property type="match status" value="1"/>
</dbReference>
<dbReference type="NCBIfam" id="NF006819">
    <property type="entry name" value="PRK09344.1-1"/>
    <property type="match status" value="1"/>
</dbReference>
<dbReference type="NCBIfam" id="NF006820">
    <property type="entry name" value="PRK09344.1-2"/>
    <property type="match status" value="1"/>
</dbReference>
<dbReference type="NCBIfam" id="NF006821">
    <property type="entry name" value="PRK09344.1-3"/>
    <property type="match status" value="1"/>
</dbReference>
<dbReference type="PANTHER" id="PTHR30031:SF0">
    <property type="entry name" value="PHOSPHOENOLPYRUVATE CARBOXYKINASE (ATP)"/>
    <property type="match status" value="1"/>
</dbReference>
<dbReference type="PANTHER" id="PTHR30031">
    <property type="entry name" value="PHOSPHOENOLPYRUVATE CARBOXYKINASE ATP"/>
    <property type="match status" value="1"/>
</dbReference>
<dbReference type="Pfam" id="PF01293">
    <property type="entry name" value="PEPCK_ATP"/>
    <property type="match status" value="1"/>
</dbReference>
<dbReference type="PIRSF" id="PIRSF006294">
    <property type="entry name" value="PEP_crbxkin"/>
    <property type="match status" value="1"/>
</dbReference>
<dbReference type="SUPFAM" id="SSF68923">
    <property type="entry name" value="PEP carboxykinase N-terminal domain"/>
    <property type="match status" value="1"/>
</dbReference>
<dbReference type="SUPFAM" id="SSF53795">
    <property type="entry name" value="PEP carboxykinase-like"/>
    <property type="match status" value="1"/>
</dbReference>
<dbReference type="PROSITE" id="PS00532">
    <property type="entry name" value="PEPCK_ATP"/>
    <property type="match status" value="1"/>
</dbReference>
<comment type="function">
    <text evidence="1">Involved in the gluconeogenesis. Catalyzes the conversion of oxaloacetate (OAA) to phosphoenolpyruvate (PEP) through direct phosphoryl transfer between the nucleoside triphosphate and OAA.</text>
</comment>
<comment type="catalytic activity">
    <reaction evidence="1">
        <text>oxaloacetate + ATP = phosphoenolpyruvate + ADP + CO2</text>
        <dbReference type="Rhea" id="RHEA:18617"/>
        <dbReference type="ChEBI" id="CHEBI:16452"/>
        <dbReference type="ChEBI" id="CHEBI:16526"/>
        <dbReference type="ChEBI" id="CHEBI:30616"/>
        <dbReference type="ChEBI" id="CHEBI:58702"/>
        <dbReference type="ChEBI" id="CHEBI:456216"/>
        <dbReference type="EC" id="4.1.1.49"/>
    </reaction>
</comment>
<comment type="cofactor">
    <cofactor evidence="1">
        <name>Mn(2+)</name>
        <dbReference type="ChEBI" id="CHEBI:29035"/>
    </cofactor>
    <text evidence="1">Binds 1 Mn(2+) ion per subunit.</text>
</comment>
<comment type="pathway">
    <text evidence="1">Carbohydrate biosynthesis; gluconeogenesis.</text>
</comment>
<comment type="subunit">
    <text evidence="1">Monomer.</text>
</comment>
<comment type="subcellular location">
    <subcellularLocation>
        <location evidence="1">Cytoplasm</location>
    </subcellularLocation>
</comment>
<comment type="similarity">
    <text evidence="1">Belongs to the phosphoenolpyruvate carboxykinase (ATP) family.</text>
</comment>
<keyword id="KW-0067">ATP-binding</keyword>
<keyword id="KW-0963">Cytoplasm</keyword>
<keyword id="KW-0210">Decarboxylase</keyword>
<keyword id="KW-0312">Gluconeogenesis</keyword>
<keyword id="KW-0456">Lyase</keyword>
<keyword id="KW-0464">Manganese</keyword>
<keyword id="KW-0479">Metal-binding</keyword>
<keyword id="KW-0547">Nucleotide-binding</keyword>
<feature type="chain" id="PRO_0000236940" description="Phosphoenolpyruvate carboxykinase (ATP)">
    <location>
        <begin position="1"/>
        <end position="539"/>
    </location>
</feature>
<feature type="binding site" evidence="1">
    <location>
        <position position="64"/>
    </location>
    <ligand>
        <name>substrate</name>
    </ligand>
</feature>
<feature type="binding site" evidence="1">
    <location>
        <position position="206"/>
    </location>
    <ligand>
        <name>substrate</name>
    </ligand>
</feature>
<feature type="binding site" evidence="1">
    <location>
        <position position="212"/>
    </location>
    <ligand>
        <name>ATP</name>
        <dbReference type="ChEBI" id="CHEBI:30616"/>
    </ligand>
</feature>
<feature type="binding site" evidence="1">
    <location>
        <position position="212"/>
    </location>
    <ligand>
        <name>Mn(2+)</name>
        <dbReference type="ChEBI" id="CHEBI:29035"/>
    </ligand>
</feature>
<feature type="binding site" evidence="1">
    <location>
        <position position="212"/>
    </location>
    <ligand>
        <name>substrate</name>
    </ligand>
</feature>
<feature type="binding site" evidence="1">
    <location>
        <position position="231"/>
    </location>
    <ligand>
        <name>ATP</name>
        <dbReference type="ChEBI" id="CHEBI:30616"/>
    </ligand>
</feature>
<feature type="binding site" evidence="1">
    <location>
        <position position="231"/>
    </location>
    <ligand>
        <name>Mn(2+)</name>
        <dbReference type="ChEBI" id="CHEBI:29035"/>
    </ligand>
</feature>
<feature type="binding site" evidence="1">
    <location>
        <begin position="247"/>
        <end position="255"/>
    </location>
    <ligand>
        <name>ATP</name>
        <dbReference type="ChEBI" id="CHEBI:30616"/>
    </ligand>
</feature>
<feature type="binding site" evidence="1">
    <location>
        <position position="268"/>
    </location>
    <ligand>
        <name>Mn(2+)</name>
        <dbReference type="ChEBI" id="CHEBI:29035"/>
    </ligand>
</feature>
<feature type="binding site" evidence="1">
    <location>
        <position position="296"/>
    </location>
    <ligand>
        <name>ATP</name>
        <dbReference type="ChEBI" id="CHEBI:30616"/>
    </ligand>
</feature>
<feature type="binding site" evidence="1">
    <location>
        <position position="332"/>
    </location>
    <ligand>
        <name>ATP</name>
        <dbReference type="ChEBI" id="CHEBI:30616"/>
    </ligand>
</feature>
<feature type="binding site" evidence="1">
    <location>
        <position position="332"/>
    </location>
    <ligand>
        <name>substrate</name>
    </ligand>
</feature>
<feature type="binding site" evidence="1">
    <location>
        <begin position="448"/>
        <end position="449"/>
    </location>
    <ligand>
        <name>ATP</name>
        <dbReference type="ChEBI" id="CHEBI:30616"/>
    </ligand>
</feature>
<feature type="binding site" evidence="1">
    <location>
        <position position="454"/>
    </location>
    <ligand>
        <name>ATP</name>
        <dbReference type="ChEBI" id="CHEBI:30616"/>
    </ligand>
</feature>